<proteinExistence type="inferred from homology"/>
<dbReference type="EC" id="2.5.1.-" evidence="1"/>
<dbReference type="EMBL" id="CP001089">
    <property type="protein sequence ID" value="ACD96383.1"/>
    <property type="molecule type" value="Genomic_DNA"/>
</dbReference>
<dbReference type="RefSeq" id="WP_012470713.1">
    <property type="nucleotide sequence ID" value="NC_010814.1"/>
</dbReference>
<dbReference type="SMR" id="B3E6X8"/>
<dbReference type="STRING" id="398767.Glov_2670"/>
<dbReference type="KEGG" id="glo:Glov_2670"/>
<dbReference type="eggNOG" id="COG0500">
    <property type="taxonomic scope" value="Bacteria"/>
</dbReference>
<dbReference type="HOGENOM" id="CLU_052665_0_0_7"/>
<dbReference type="OrthoDB" id="9765084at2"/>
<dbReference type="Proteomes" id="UP000002420">
    <property type="component" value="Chromosome"/>
</dbReference>
<dbReference type="GO" id="GO:0008168">
    <property type="term" value="F:methyltransferase activity"/>
    <property type="evidence" value="ECO:0007669"/>
    <property type="project" value="TreeGrafter"/>
</dbReference>
<dbReference type="GO" id="GO:0016765">
    <property type="term" value="F:transferase activity, transferring alkyl or aryl (other than methyl) groups"/>
    <property type="evidence" value="ECO:0007669"/>
    <property type="project" value="InterPro"/>
</dbReference>
<dbReference type="GO" id="GO:0002098">
    <property type="term" value="P:tRNA wobble uridine modification"/>
    <property type="evidence" value="ECO:0007669"/>
    <property type="project" value="InterPro"/>
</dbReference>
<dbReference type="CDD" id="cd02440">
    <property type="entry name" value="AdoMet_MTases"/>
    <property type="match status" value="1"/>
</dbReference>
<dbReference type="Gene3D" id="3.40.50.150">
    <property type="entry name" value="Vaccinia Virus protein VP39"/>
    <property type="match status" value="1"/>
</dbReference>
<dbReference type="HAMAP" id="MF_01590">
    <property type="entry name" value="tRNA_carboxymethyltr_CmoB"/>
    <property type="match status" value="1"/>
</dbReference>
<dbReference type="InterPro" id="IPR010017">
    <property type="entry name" value="CmoB"/>
</dbReference>
<dbReference type="InterPro" id="IPR027555">
    <property type="entry name" value="Mo5U34_MeTrfas-like"/>
</dbReference>
<dbReference type="InterPro" id="IPR029063">
    <property type="entry name" value="SAM-dependent_MTases_sf"/>
</dbReference>
<dbReference type="NCBIfam" id="NF011650">
    <property type="entry name" value="PRK15068.1"/>
    <property type="match status" value="1"/>
</dbReference>
<dbReference type="NCBIfam" id="TIGR00452">
    <property type="entry name" value="tRNA 5-methoxyuridine(34)/uridine 5-oxyacetic acid(34) synthase CmoB"/>
    <property type="match status" value="1"/>
</dbReference>
<dbReference type="PANTHER" id="PTHR43464">
    <property type="entry name" value="METHYLTRANSFERASE"/>
    <property type="match status" value="1"/>
</dbReference>
<dbReference type="PANTHER" id="PTHR43464:SF95">
    <property type="entry name" value="TRNA U34 CARBOXYMETHYLTRANSFERASE"/>
    <property type="match status" value="1"/>
</dbReference>
<dbReference type="Pfam" id="PF08003">
    <property type="entry name" value="Methyltransf_9"/>
    <property type="match status" value="1"/>
</dbReference>
<dbReference type="SUPFAM" id="SSF53335">
    <property type="entry name" value="S-adenosyl-L-methionine-dependent methyltransferases"/>
    <property type="match status" value="1"/>
</dbReference>
<evidence type="ECO:0000255" key="1">
    <source>
        <dbReference type="HAMAP-Rule" id="MF_01590"/>
    </source>
</evidence>
<organism>
    <name type="scientific">Trichlorobacter lovleyi (strain ATCC BAA-1151 / DSM 17278 / SZ)</name>
    <name type="common">Geobacter lovleyi</name>
    <dbReference type="NCBI Taxonomy" id="398767"/>
    <lineage>
        <taxon>Bacteria</taxon>
        <taxon>Pseudomonadati</taxon>
        <taxon>Thermodesulfobacteriota</taxon>
        <taxon>Desulfuromonadia</taxon>
        <taxon>Geobacterales</taxon>
        <taxon>Geobacteraceae</taxon>
        <taxon>Trichlorobacter</taxon>
    </lineage>
</organism>
<accession>B3E6X8</accession>
<comment type="function">
    <text evidence="1">Catalyzes carboxymethyl transfer from carboxy-S-adenosyl-L-methionine (Cx-SAM) to 5-hydroxyuridine (ho5U) to form 5-carboxymethoxyuridine (cmo5U) at position 34 in tRNAs.</text>
</comment>
<comment type="catalytic activity">
    <reaction evidence="1">
        <text>carboxy-S-adenosyl-L-methionine + 5-hydroxyuridine(34) in tRNA = 5-carboxymethoxyuridine(34) in tRNA + S-adenosyl-L-homocysteine + H(+)</text>
        <dbReference type="Rhea" id="RHEA:52848"/>
        <dbReference type="Rhea" id="RHEA-COMP:13381"/>
        <dbReference type="Rhea" id="RHEA-COMP:13383"/>
        <dbReference type="ChEBI" id="CHEBI:15378"/>
        <dbReference type="ChEBI" id="CHEBI:57856"/>
        <dbReference type="ChEBI" id="CHEBI:134278"/>
        <dbReference type="ChEBI" id="CHEBI:136877"/>
        <dbReference type="ChEBI" id="CHEBI:136879"/>
    </reaction>
</comment>
<comment type="subunit">
    <text evidence="1">Homotetramer.</text>
</comment>
<comment type="similarity">
    <text evidence="1">Belongs to the class I-like SAM-binding methyltransferase superfamily. CmoB family.</text>
</comment>
<keyword id="KW-1185">Reference proteome</keyword>
<keyword id="KW-0808">Transferase</keyword>
<keyword id="KW-0819">tRNA processing</keyword>
<protein>
    <recommendedName>
        <fullName evidence="1">tRNA U34 carboxymethyltransferase</fullName>
        <ecNumber evidence="1">2.5.1.-</ecNumber>
    </recommendedName>
</protein>
<name>CMOB_TRIL1</name>
<gene>
    <name evidence="1" type="primary">cmoB</name>
    <name type="ordered locus">Glov_2670</name>
</gene>
<feature type="chain" id="PRO_1000201299" description="tRNA U34 carboxymethyltransferase">
    <location>
        <begin position="1"/>
        <end position="323"/>
    </location>
</feature>
<feature type="binding site" evidence="1">
    <location>
        <position position="91"/>
    </location>
    <ligand>
        <name>carboxy-S-adenosyl-L-methionine</name>
        <dbReference type="ChEBI" id="CHEBI:134278"/>
    </ligand>
</feature>
<feature type="binding site" evidence="1">
    <location>
        <position position="105"/>
    </location>
    <ligand>
        <name>carboxy-S-adenosyl-L-methionine</name>
        <dbReference type="ChEBI" id="CHEBI:134278"/>
    </ligand>
</feature>
<feature type="binding site" evidence="1">
    <location>
        <position position="110"/>
    </location>
    <ligand>
        <name>carboxy-S-adenosyl-L-methionine</name>
        <dbReference type="ChEBI" id="CHEBI:134278"/>
    </ligand>
</feature>
<feature type="binding site" evidence="1">
    <location>
        <position position="130"/>
    </location>
    <ligand>
        <name>carboxy-S-adenosyl-L-methionine</name>
        <dbReference type="ChEBI" id="CHEBI:134278"/>
    </ligand>
</feature>
<feature type="binding site" evidence="1">
    <location>
        <begin position="180"/>
        <end position="181"/>
    </location>
    <ligand>
        <name>carboxy-S-adenosyl-L-methionine</name>
        <dbReference type="ChEBI" id="CHEBI:134278"/>
    </ligand>
</feature>
<feature type="binding site" evidence="1">
    <location>
        <position position="196"/>
    </location>
    <ligand>
        <name>carboxy-S-adenosyl-L-methionine</name>
        <dbReference type="ChEBI" id="CHEBI:134278"/>
    </ligand>
</feature>
<feature type="binding site" evidence="1">
    <location>
        <position position="200"/>
    </location>
    <ligand>
        <name>carboxy-S-adenosyl-L-methionine</name>
        <dbReference type="ChEBI" id="CHEBI:134278"/>
    </ligand>
</feature>
<feature type="binding site" evidence="1">
    <location>
        <position position="315"/>
    </location>
    <ligand>
        <name>carboxy-S-adenosyl-L-methionine</name>
        <dbReference type="ChEBI" id="CHEBI:134278"/>
    </ligand>
</feature>
<reference key="1">
    <citation type="submission" date="2008-05" db="EMBL/GenBank/DDBJ databases">
        <title>Complete sequence of chromosome of Geobacter lovleyi SZ.</title>
        <authorList>
            <consortium name="US DOE Joint Genome Institute"/>
            <person name="Lucas S."/>
            <person name="Copeland A."/>
            <person name="Lapidus A."/>
            <person name="Glavina del Rio T."/>
            <person name="Dalin E."/>
            <person name="Tice H."/>
            <person name="Bruce D."/>
            <person name="Goodwin L."/>
            <person name="Pitluck S."/>
            <person name="Chertkov O."/>
            <person name="Meincke L."/>
            <person name="Brettin T."/>
            <person name="Detter J.C."/>
            <person name="Han C."/>
            <person name="Tapia R."/>
            <person name="Kuske C.R."/>
            <person name="Schmutz J."/>
            <person name="Larimer F."/>
            <person name="Land M."/>
            <person name="Hauser L."/>
            <person name="Kyrpides N."/>
            <person name="Mikhailova N."/>
            <person name="Sung Y."/>
            <person name="Fletcher K.E."/>
            <person name="Ritalahti K.M."/>
            <person name="Loeffler F.E."/>
            <person name="Richardson P."/>
        </authorList>
    </citation>
    <scope>NUCLEOTIDE SEQUENCE [LARGE SCALE GENOMIC DNA]</scope>
    <source>
        <strain>ATCC BAA-1151 / DSM 17278 / SZ</strain>
    </source>
</reference>
<sequence>MNYYDALYPQLVAMGQERWAAQLQSTLSKQLLLERYGDMPEWLSALEALPQIQPSCIDLQDSVTIGSGSDLGRISSEELITLLQAFHPWRKGPYSLFGVEIETEWRSDWKWDRLLPHIQPLAGRRVLDVGCGNGYHGWRMRGVGADFVLGIEPFLVSVMQFQVMQRYLRDPQHQVIPIGVEDLPANLACFDSVFSMGVLYHRRSPLDHILELKGCLRPGGQLILETLIVEGDQETVFMPPGRYAKMRNVWFLPSIPAMTLWLQRCGFTEIACVNTNRTSHGEQHATDWMRFESLADYLDPDDESKTIEGHPAPLRAIFIATRP</sequence>